<organism>
    <name type="scientific">Mustela putorius furo</name>
    <name type="common">European domestic ferret</name>
    <name type="synonym">Mustela furo</name>
    <dbReference type="NCBI Taxonomy" id="9669"/>
    <lineage>
        <taxon>Eukaryota</taxon>
        <taxon>Metazoa</taxon>
        <taxon>Chordata</taxon>
        <taxon>Craniata</taxon>
        <taxon>Vertebrata</taxon>
        <taxon>Euteleostomi</taxon>
        <taxon>Mammalia</taxon>
        <taxon>Eutheria</taxon>
        <taxon>Laurasiatheria</taxon>
        <taxon>Carnivora</taxon>
        <taxon>Caniformia</taxon>
        <taxon>Musteloidea</taxon>
        <taxon>Mustelidae</taxon>
        <taxon>Mustelinae</taxon>
        <taxon>Mustela</taxon>
    </lineage>
</organism>
<comment type="function">
    <text evidence="2 3 4">Voltage-gated potassium channel that mediates transmembrane potassium transport in excitable membranes, primarily in the brain, but also in rodent heart. Mediates the major part of the dendritic A-type current I(SA) in brain neurons (By similarity). This current is activated at membrane potentials that are below the threshold for action potentials. It regulates neuronal excitability, prolongs the latency before the first spike in a series of action potentials, regulates the frequency of repetitive action potential firing, shortens the duration of action potentials and regulates the back-propagation of action potentials from the neuronal cell body to the dendrites. Contributes to the regulation of the circadian rhythm of action potential firing in suprachiasmatic nucleus neurons, which regulates the circadian rhythm of locomotor activity (By similarity). Functions downstream of the metabotropic glutamate receptor GRM5 and plays a role in neuronal excitability and in nociception mediated by activation of GRM5 (By similarity). Mediates the transient outward current I(to) in rodent heart left ventricle apex cells, but not in human heart, where this current is mediated by another family member. Forms tetrameric potassium-selective channels through which potassium ions pass in accordance with their electrochemical gradient. The channel alternates between opened and closed conformations in response to the voltage difference across the membrane. Can form functional homotetrameric channels and heterotetrameric channels that contain variable proportions of KCND2 and KCND3; channel properties depend on the type of pore-forming alpha subunits that are part of the channel. In vivo, membranes probably contain a mixture of heteromeric potassium channel complexes. Interaction with specific isoforms of the regulatory subunits KCNIP1, KCNIP2, KCNIP3 or KCNIP4 strongly increases expression at the cell surface and thereby increases channel activity; it modulates the kinetics of channel activation and inactivation, shifts the threshold for channel activation to more negative voltage values, shifts the threshold for inactivation to less negative voltages and accelerates recovery after inactivation. Likewise, interaction with DPP6 or DPP10 promotes expression at the cell membrane and regulates both channel characteristics and activity (By similarity). Upon depolarization, the channel goes from a resting closed state (C state) to an activated but non-conducting state (C* state), from there, the channel may either inactivate (I state) or open (O state) (By similarity).</text>
</comment>
<comment type="catalytic activity">
    <reaction evidence="3">
        <text>K(+)(in) = K(+)(out)</text>
        <dbReference type="Rhea" id="RHEA:29463"/>
        <dbReference type="ChEBI" id="CHEBI:29103"/>
    </reaction>
</comment>
<comment type="biophysicochemical properties">
    <kinetics>
        <text evidence="7">Homotetrameric channels activate rapidly, i.e within a few msec. After that, they inactivate rapidly, i.e within about 50-100 msec. The voltage-dependence of activation and inactivation and other channel characteristics vary depending on the experimental conditions, the expression system and the presence or absence of ancillary subunits. Homotetrameric channels have a unitary conductance of about 4 pS when expressed in a heterologous system. For the activation of homotetrameric channels expressed in xenopus oocytes, the voltage at half-maximal amplitude is about -10 mV. The time constant for inactivation is about 20 msec. For inactivation, the voltage at half-maximal amplitude is -62 mV. The time constant for recovery after inactivation is about 70 msec.</text>
    </kinetics>
</comment>
<comment type="subunit">
    <text evidence="2 3 4">Homotetramer or heterotetramer with KCND1 or KCND3. Associates with the regulatory subunits KCNIP2, KCNIP3 and KCNIP4. Interacts with the regulatory subunit KCNIP1; this interaction mediates the capture of both the N- and C-terminus of KCND2, preventing N-type inactivation and stabilizing the S6 conformation, thereby accelerating closed state inactivation and recovery (By similarity). In vivo, probably exists as heteromeric complex containing variable proportions of KCND1, KCND2, KCND3, KCNIP1, KCNIP2, KCNIP3, KCNIP4, DPP6 and DPP10. The tetrameric channel can associate with up to four regulatory subunits, such as KCNIP2 or KCNIP4. Interaction with four KCNIP4 chains does not reduce interaction with DPP10 (By similarity). Interacts with DLG4 and NCS1/FREQ (By similarity). Interacts with DLG1. Probably part of a complex consisting of KCNIP1, KCNIP2 isoform 3 and KCND2. Interacts with FLNA, FLNC and DPP10 (By similarity). Identified in a complex with cAMP-dependent protein kinase (PKA), CAV3, AKAP6 and KCND3 in cardiac myocytes (By similarity). Interacts (via S1 and S2 helices) with DPP6; this interaction stabilizes the conformation of the S1-S2 helices and facilitates S4 conformational change, including S4 sliding up and down, thereby accelerating activation, inactivation, and recovery (By similarity).</text>
</comment>
<comment type="subcellular location">
    <subcellularLocation>
        <location evidence="2">Cell membrane</location>
        <topology evidence="2">Multi-pass membrane protein</topology>
    </subcellularLocation>
    <subcellularLocation>
        <location evidence="2">Cell projection</location>
        <location evidence="2">Dendrite</location>
    </subcellularLocation>
    <subcellularLocation>
        <location evidence="2">Synapse</location>
    </subcellularLocation>
    <subcellularLocation>
        <location evidence="2">Perikaryon</location>
    </subcellularLocation>
    <subcellularLocation>
        <location evidence="2">Postsynaptic cell membrane</location>
    </subcellularLocation>
    <subcellularLocation>
        <location evidence="2">Cell projection</location>
        <location evidence="2">Dendritic spine</location>
    </subcellularLocation>
    <subcellularLocation>
        <location evidence="2">Cell membrane</location>
        <location evidence="2">Sarcolemma</location>
    </subcellularLocation>
    <subcellularLocation>
        <location evidence="2">Cell junction</location>
    </subcellularLocation>
    <subcellularLocation>
        <location evidence="2">Membrane</location>
        <location evidence="2">Caveola</location>
    </subcellularLocation>
    <text evidence="2 4">In neurons, primarily detected on dendrites, dendritic spines and on the neuron cell body, but not on axons. Localized preferentially at the dendrites of pyramidal cells in the hippocampus CA1 layer. Detected at GABAergic synpases. Detected at cell junctions that are distinct from synaptic cell contacts. Detected in lipid rafts. Detected primarily at the endoplasmic reticulum or Golgi when expressed by itself. Interaction with KCNIP1, KCNIP2, KCNIP3 or KCNIP4 promotes expression at the cell membrane. Interaction with DPP6 or DPP10 promotes expression at the cell membrane (By similarity). Internalized from the cell membrane by clathrin-dependent endocytosis in response to activation of AMPA-selective glutamate receptors and PKA-mediated phosphorylation at Ser-552. Redistributed from dendritic spines to the main dendritic shaft in response to activation of AMPA-selective glutamate receptors and activation of PKA (By similarity).</text>
</comment>
<comment type="domain">
    <text evidence="1">The transmembrane segment S4 functions as a voltage-sensor and is characterized by a series of positively charged amino acids at every third position. Channel opening and closing is effected by a conformation change that affects the position and orientation of the voltage-sensor paddle formed by S3 and S4 within the membrane. A transmembrane electric field that is positive inside would push the positively charged S4 segment outwards, thereby opening the pore, while a field that is negative inside would pull the S4 segment inwards and close the pore. Changes in the position and orientation of S4 are then transmitted to the activation gate formed by the inner helix bundle via the S4-S5 linker region.</text>
</comment>
<comment type="domain">
    <text evidence="2 3">The N-terminal cytoplasmic region can mediate N-type inactivation by physically blocking the channel. This probably does not happen in vivo, where the N-terminal region mediates interaction with regulatory subunits, such as KCNIP1 and KCNIP2 (By similarity). The zinc binding sites in the N-terminal domain are important for tetramerization and assembly of a functional channel complex (By similarity). The channel undergoes closed-state inactivation, where conformation changes lead to inactivation through an intermediate state involving breakdown of its 4-fold symmetry. that governs the distinct transient, fast-inactivating currents (By similarity).</text>
</comment>
<comment type="domain">
    <text evidence="2">The C-terminal cytoplasmic region is important for normal expression at the cell membrane and modulates the voltage-dependence of channel activation and inactivation. It is required for interaction with KCNIP2, and probably other family members as well.</text>
</comment>
<comment type="PTM">
    <text evidence="2 4">Phosphorylation in response to MAPK activation is increased in stimulated dendrites. Interaction with KCNIP2 and DPP6 propomtes phosphorylation by PKA at Ser-552. Phosphorylation at Ser-552 has no effect on interaction with KCNIP3, but is required for the regulation of channel activity by KCNIP3. Phosphorylation at Ser-552 leads to KCND2 internalization (By similarity). Phosphorylated by MAPK in response to signaling via the metabotropic glutamate receptor GRM5 (By similarity). Phosphorylation at Ser-616 is required for the down-regulation of neuronal A-type currents in response to signaling via GRM5 (By similarity).</text>
</comment>
<comment type="miscellaneous">
    <text evidence="2 7 8">The transient neuronal A-type potassium current called I(SA) is triggered at membrane potentials that are below the threshold for action potentials. It inactivates rapidly and recovers rapidly from inactivation. It regulates the firing of action potentials and plays a role in synaptic integration and plasticity. Potassium channels containing KCND2 account for about 80% of the neuronal A-type potassium current. In contrast, the potassium channel responsible for the cardiac I(to) current differs between species; it is mediated by KCND2 in rodents. In human and other non-rodents KCND3 may play an equivalent role.</text>
</comment>
<comment type="miscellaneous">
    <text evidence="2">Is specifically and reversibly inhibited by the scorpion toxin Ts8 (AC P69940).</text>
</comment>
<comment type="similarity">
    <text evidence="6">Belongs to the potassium channel family. D (Shal) (TC 1.A.1.2) subfamily. Kv4.2/KCND2 sub-subfamily.</text>
</comment>
<dbReference type="EMBL" id="AY147192">
    <property type="protein sequence ID" value="AAN39878.1"/>
    <property type="molecule type" value="mRNA"/>
</dbReference>
<dbReference type="RefSeq" id="NP_001297106.1">
    <property type="nucleotide sequence ID" value="NM_001310177.1"/>
</dbReference>
<dbReference type="SMR" id="Q8HYZ1"/>
<dbReference type="STRING" id="9669.ENSMPUP00000007013"/>
<dbReference type="GeneID" id="101669961"/>
<dbReference type="CTD" id="3751"/>
<dbReference type="eggNOG" id="KOG4390">
    <property type="taxonomic scope" value="Eukaryota"/>
</dbReference>
<dbReference type="InParanoid" id="Q8HYZ1"/>
<dbReference type="OrthoDB" id="433309at2759"/>
<dbReference type="Proteomes" id="UP000000715">
    <property type="component" value="Unplaced"/>
</dbReference>
<dbReference type="GO" id="GO:0070161">
    <property type="term" value="C:anchoring junction"/>
    <property type="evidence" value="ECO:0007669"/>
    <property type="project" value="UniProtKB-SubCell"/>
</dbReference>
<dbReference type="GO" id="GO:0005901">
    <property type="term" value="C:caveola"/>
    <property type="evidence" value="ECO:0000250"/>
    <property type="project" value="UniProtKB"/>
</dbReference>
<dbReference type="GO" id="GO:0043197">
    <property type="term" value="C:dendritic spine"/>
    <property type="evidence" value="ECO:0000250"/>
    <property type="project" value="UniProtKB"/>
</dbReference>
<dbReference type="GO" id="GO:0032809">
    <property type="term" value="C:neuronal cell body membrane"/>
    <property type="evidence" value="ECO:0000250"/>
    <property type="project" value="UniProtKB"/>
</dbReference>
<dbReference type="GO" id="GO:0043204">
    <property type="term" value="C:perikaryon"/>
    <property type="evidence" value="ECO:0007669"/>
    <property type="project" value="UniProtKB-SubCell"/>
</dbReference>
<dbReference type="GO" id="GO:0005886">
    <property type="term" value="C:plasma membrane"/>
    <property type="evidence" value="ECO:0000250"/>
    <property type="project" value="UniProtKB"/>
</dbReference>
<dbReference type="GO" id="GO:0044853">
    <property type="term" value="C:plasma membrane raft"/>
    <property type="evidence" value="ECO:0000250"/>
    <property type="project" value="UniProtKB"/>
</dbReference>
<dbReference type="GO" id="GO:0045211">
    <property type="term" value="C:postsynaptic membrane"/>
    <property type="evidence" value="ECO:0000250"/>
    <property type="project" value="UniProtKB"/>
</dbReference>
<dbReference type="GO" id="GO:0042383">
    <property type="term" value="C:sarcolemma"/>
    <property type="evidence" value="ECO:0000250"/>
    <property type="project" value="UniProtKB"/>
</dbReference>
<dbReference type="GO" id="GO:0030315">
    <property type="term" value="C:T-tubule"/>
    <property type="evidence" value="ECO:0000250"/>
    <property type="project" value="UniProtKB"/>
</dbReference>
<dbReference type="GO" id="GO:0008076">
    <property type="term" value="C:voltage-gated potassium channel complex"/>
    <property type="evidence" value="ECO:0000250"/>
    <property type="project" value="UniProtKB"/>
</dbReference>
<dbReference type="GO" id="GO:0005250">
    <property type="term" value="F:A-type (transient outward) potassium channel activity"/>
    <property type="evidence" value="ECO:0000250"/>
    <property type="project" value="UniProtKB"/>
</dbReference>
<dbReference type="GO" id="GO:0046872">
    <property type="term" value="F:metal ion binding"/>
    <property type="evidence" value="ECO:0007669"/>
    <property type="project" value="UniProtKB-KW"/>
</dbReference>
<dbReference type="GO" id="GO:1905030">
    <property type="term" value="F:voltage-gated monoatomic ion channel activity involved in regulation of postsynaptic membrane potential"/>
    <property type="evidence" value="ECO:0007669"/>
    <property type="project" value="TreeGrafter"/>
</dbReference>
<dbReference type="GO" id="GO:0005249">
    <property type="term" value="F:voltage-gated potassium channel activity"/>
    <property type="evidence" value="ECO:0000250"/>
    <property type="project" value="UniProtKB"/>
</dbReference>
<dbReference type="GO" id="GO:0086001">
    <property type="term" value="P:cardiac muscle cell action potential"/>
    <property type="evidence" value="ECO:0000250"/>
    <property type="project" value="UniProtKB"/>
</dbReference>
<dbReference type="GO" id="GO:0071456">
    <property type="term" value="P:cellular response to hypoxia"/>
    <property type="evidence" value="ECO:0000250"/>
    <property type="project" value="UniProtKB"/>
</dbReference>
<dbReference type="GO" id="GO:0071805">
    <property type="term" value="P:potassium ion transmembrane transport"/>
    <property type="evidence" value="ECO:0000250"/>
    <property type="project" value="UniProtKB"/>
</dbReference>
<dbReference type="GO" id="GO:0051260">
    <property type="term" value="P:protein homooligomerization"/>
    <property type="evidence" value="ECO:0007669"/>
    <property type="project" value="InterPro"/>
</dbReference>
<dbReference type="FunFam" id="1.10.287.70:FF:000073">
    <property type="entry name" value="Potassium voltage-gated channel subfamily D member 2"/>
    <property type="match status" value="1"/>
</dbReference>
<dbReference type="FunFam" id="1.10.287.70:FF:000111">
    <property type="entry name" value="Potassium voltage-gated channel subfamily D member 3"/>
    <property type="match status" value="1"/>
</dbReference>
<dbReference type="FunFam" id="1.20.120.350:FF:000016">
    <property type="entry name" value="Potassium voltage-gated channel subfamily D member 3"/>
    <property type="match status" value="1"/>
</dbReference>
<dbReference type="FunFam" id="3.30.710.10:FF:000004">
    <property type="entry name" value="Potassium voltage-gated channel subfamily D member 3"/>
    <property type="match status" value="1"/>
</dbReference>
<dbReference type="Gene3D" id="1.10.287.70">
    <property type="match status" value="1"/>
</dbReference>
<dbReference type="Gene3D" id="3.30.710.10">
    <property type="entry name" value="Potassium Channel Kv1.1, Chain A"/>
    <property type="match status" value="1"/>
</dbReference>
<dbReference type="Gene3D" id="1.20.120.350">
    <property type="entry name" value="Voltage-gated potassium channels. Chain C"/>
    <property type="match status" value="1"/>
</dbReference>
<dbReference type="InterPro" id="IPR000210">
    <property type="entry name" value="BTB/POZ_dom"/>
</dbReference>
<dbReference type="InterPro" id="IPR005821">
    <property type="entry name" value="Ion_trans_dom"/>
</dbReference>
<dbReference type="InterPro" id="IPR003968">
    <property type="entry name" value="K_chnl_volt-dep_Kv"/>
</dbReference>
<dbReference type="InterPro" id="IPR003975">
    <property type="entry name" value="K_chnl_volt-dep_Kv4"/>
</dbReference>
<dbReference type="InterPro" id="IPR004055">
    <property type="entry name" value="K_chnl_volt-dep_Kv4.2"/>
</dbReference>
<dbReference type="InterPro" id="IPR024587">
    <property type="entry name" value="K_chnl_volt-dep_Kv4_C"/>
</dbReference>
<dbReference type="InterPro" id="IPR021645">
    <property type="entry name" value="Shal-type_N"/>
</dbReference>
<dbReference type="InterPro" id="IPR011333">
    <property type="entry name" value="SKP1/BTB/POZ_sf"/>
</dbReference>
<dbReference type="InterPro" id="IPR003131">
    <property type="entry name" value="T1-type_BTB"/>
</dbReference>
<dbReference type="InterPro" id="IPR028325">
    <property type="entry name" value="VG_K_chnl"/>
</dbReference>
<dbReference type="InterPro" id="IPR027359">
    <property type="entry name" value="Volt_channel_dom_sf"/>
</dbReference>
<dbReference type="PANTHER" id="PTHR11537:SF265">
    <property type="entry name" value="POTASSIUM VOLTAGE-GATED CHANNEL SUBFAMILY D MEMBER 2"/>
    <property type="match status" value="1"/>
</dbReference>
<dbReference type="PANTHER" id="PTHR11537">
    <property type="entry name" value="VOLTAGE-GATED POTASSIUM CHANNEL"/>
    <property type="match status" value="1"/>
</dbReference>
<dbReference type="Pfam" id="PF02214">
    <property type="entry name" value="BTB_2"/>
    <property type="match status" value="1"/>
</dbReference>
<dbReference type="Pfam" id="PF11879">
    <property type="entry name" value="DUF3399"/>
    <property type="match status" value="1"/>
</dbReference>
<dbReference type="Pfam" id="PF00520">
    <property type="entry name" value="Ion_trans"/>
    <property type="match status" value="1"/>
</dbReference>
<dbReference type="Pfam" id="PF11601">
    <property type="entry name" value="Shal-type"/>
    <property type="match status" value="1"/>
</dbReference>
<dbReference type="PRINTS" id="PR00169">
    <property type="entry name" value="KCHANNEL"/>
</dbReference>
<dbReference type="PRINTS" id="PR01517">
    <property type="entry name" value="KV42CHANNEL"/>
</dbReference>
<dbReference type="PRINTS" id="PR01491">
    <property type="entry name" value="KVCHANNEL"/>
</dbReference>
<dbReference type="PRINTS" id="PR01497">
    <property type="entry name" value="SHALCHANNEL"/>
</dbReference>
<dbReference type="SMART" id="SM00225">
    <property type="entry name" value="BTB"/>
    <property type="match status" value="1"/>
</dbReference>
<dbReference type="SUPFAM" id="SSF54695">
    <property type="entry name" value="POZ domain"/>
    <property type="match status" value="1"/>
</dbReference>
<dbReference type="SUPFAM" id="SSF81324">
    <property type="entry name" value="Voltage-gated potassium channels"/>
    <property type="match status" value="1"/>
</dbReference>
<proteinExistence type="evidence at transcript level"/>
<feature type="chain" id="PRO_0000232494" description="A-type voltage-gated potassium channel KCND2">
    <location>
        <begin position="1"/>
        <end position="630"/>
    </location>
</feature>
<feature type="topological domain" description="Cytoplasmic" evidence="3">
    <location>
        <begin position="1"/>
        <end position="184"/>
    </location>
</feature>
<feature type="transmembrane region" description="Helical; Name=Segment S1" evidence="3">
    <location>
        <begin position="185"/>
        <end position="206"/>
    </location>
</feature>
<feature type="topological domain" description="Extracellular" evidence="3">
    <location>
        <begin position="207"/>
        <end position="226"/>
    </location>
</feature>
<feature type="transmembrane region" description="Helical; Name=Segment S2" evidence="3">
    <location>
        <begin position="227"/>
        <end position="249"/>
    </location>
</feature>
<feature type="topological domain" description="Cytoplasmic" evidence="3">
    <location>
        <begin position="250"/>
        <end position="256"/>
    </location>
</feature>
<feature type="transmembrane region" description="Helical; Name=Segment S3" evidence="3">
    <location>
        <begin position="257"/>
        <end position="281"/>
    </location>
</feature>
<feature type="topological domain" description="Extracellular" evidence="3">
    <location>
        <begin position="282"/>
        <end position="287"/>
    </location>
</feature>
<feature type="transmembrane region" description="Helical; Voltage-sensor; Name=Segment S4" evidence="3">
    <location>
        <begin position="288"/>
        <end position="307"/>
    </location>
</feature>
<feature type="topological domain" description="Cytoplasmic" evidence="3">
    <location>
        <begin position="308"/>
        <end position="321"/>
    </location>
</feature>
<feature type="transmembrane region" description="Helical; Name=Segment S5" evidence="3">
    <location>
        <begin position="322"/>
        <end position="345"/>
    </location>
</feature>
<feature type="topological domain" description="Extracellular" evidence="3">
    <location>
        <begin position="346"/>
        <end position="357"/>
    </location>
</feature>
<feature type="intramembrane region" description="Helical; Name=Pore helix" evidence="1">
    <location>
        <begin position="358"/>
        <end position="369"/>
    </location>
</feature>
<feature type="intramembrane region" evidence="1">
    <location>
        <begin position="370"/>
        <end position="377"/>
    </location>
</feature>
<feature type="topological domain" description="Extracellular" evidence="3">
    <location>
        <begin position="378"/>
        <end position="380"/>
    </location>
</feature>
<feature type="transmembrane region" description="Helical; Name=Segment S6" evidence="3">
    <location>
        <begin position="381"/>
        <end position="403"/>
    </location>
</feature>
<feature type="topological domain" description="Cytoplasmic" evidence="3">
    <location>
        <begin position="404"/>
        <end position="630"/>
    </location>
</feature>
<feature type="region of interest" description="Interaction with KCNIP1, KCNIP2, and other family members" evidence="2">
    <location>
        <begin position="2"/>
        <end position="20"/>
    </location>
</feature>
<feature type="region of interest" description="Interaction with KCNIP1" evidence="2">
    <location>
        <begin position="71"/>
        <end position="90"/>
    </location>
</feature>
<feature type="region of interest" description="S4-S5 linker" evidence="1">
    <location>
        <begin position="308"/>
        <end position="321"/>
    </location>
</feature>
<feature type="region of interest" description="Important for normal channel activation and inactivation, for interaction with KCNIP2, and probably other family members as well" evidence="2">
    <location>
        <begin position="474"/>
        <end position="630"/>
    </location>
</feature>
<feature type="region of interest" description="Required for dendritic targeting" evidence="2">
    <location>
        <begin position="474"/>
        <end position="489"/>
    </location>
</feature>
<feature type="region of interest" description="Disordered" evidence="5">
    <location>
        <begin position="600"/>
        <end position="622"/>
    </location>
</feature>
<feature type="short sequence motif" description="Selectivity filter" evidence="1">
    <location>
        <begin position="370"/>
        <end position="375"/>
    </location>
</feature>
<feature type="short sequence motif" description="PDZ-binding" evidence="2">
    <location>
        <begin position="627"/>
        <end position="630"/>
    </location>
</feature>
<feature type="binding site" description="in chain A" evidence="3">
    <location>
        <position position="105"/>
    </location>
    <ligand>
        <name>Zn(2+)</name>
        <dbReference type="ChEBI" id="CHEBI:29105"/>
        <note>ligand shared between homotetrameric partners</note>
    </ligand>
</feature>
<feature type="binding site" description="in chain B" evidence="3">
    <location>
        <position position="111"/>
    </location>
    <ligand>
        <name>Zn(2+)</name>
        <dbReference type="ChEBI" id="CHEBI:29105"/>
        <note>ligand shared between homotetrameric partners</note>
    </ligand>
</feature>
<feature type="binding site" description="in chain A" evidence="3">
    <location>
        <position position="132"/>
    </location>
    <ligand>
        <name>Zn(2+)</name>
        <dbReference type="ChEBI" id="CHEBI:29105"/>
        <note>ligand shared between homotetrameric partners</note>
    </ligand>
</feature>
<feature type="binding site" description="in chain A" evidence="3">
    <location>
        <position position="133"/>
    </location>
    <ligand>
        <name>Zn(2+)</name>
        <dbReference type="ChEBI" id="CHEBI:29105"/>
        <note>ligand shared between homotetrameric partners</note>
    </ligand>
</feature>
<feature type="binding site" evidence="3">
    <location>
        <position position="370"/>
    </location>
    <ligand>
        <name>K(+)</name>
        <dbReference type="ChEBI" id="CHEBI:29103"/>
        <note>ligand shared between homotetrameric partners</note>
    </ligand>
</feature>
<feature type="binding site" evidence="3">
    <location>
        <position position="371"/>
    </location>
    <ligand>
        <name>K(+)</name>
        <dbReference type="ChEBI" id="CHEBI:29103"/>
        <note>ligand shared between homotetrameric partners</note>
    </ligand>
</feature>
<feature type="binding site" evidence="3">
    <location>
        <position position="372"/>
    </location>
    <ligand>
        <name>K(+)</name>
        <dbReference type="ChEBI" id="CHEBI:29103"/>
        <note>ligand shared between homotetrameric partners</note>
    </ligand>
</feature>
<feature type="binding site" evidence="3">
    <location>
        <position position="373"/>
    </location>
    <ligand>
        <name>K(+)</name>
        <dbReference type="ChEBI" id="CHEBI:29103"/>
        <note>ligand shared between homotetrameric partners</note>
    </ligand>
</feature>
<feature type="modified residue" description="Phosphothreonine" evidence="2">
    <location>
        <position position="38"/>
    </location>
</feature>
<feature type="modified residue" description="Phosphoserine" evidence="2">
    <location>
        <position position="548"/>
    </location>
</feature>
<feature type="modified residue" description="Phosphoserine" evidence="4">
    <location>
        <position position="552"/>
    </location>
</feature>
<feature type="modified residue" description="Phosphoserine" evidence="4">
    <location>
        <position position="572"/>
    </location>
</feature>
<feature type="modified residue" description="Phosphoserine" evidence="4">
    <location>
        <position position="575"/>
    </location>
</feature>
<feature type="modified residue" description="Phosphothreonine" evidence="2">
    <location>
        <position position="602"/>
    </location>
</feature>
<feature type="modified residue" description="Phosphothreonine" evidence="2">
    <location>
        <position position="607"/>
    </location>
</feature>
<feature type="modified residue" description="Phosphoserine" evidence="4">
    <location>
        <position position="616"/>
    </location>
</feature>
<reference key="1">
    <citation type="submission" date="2002-09" db="EMBL/GenBank/DDBJ databases">
        <title>Ferret cardiac Kv4.2 potassium channel.</title>
        <authorList>
            <person name="Patel S.P."/>
            <person name="Strauss H.C."/>
        </authorList>
    </citation>
    <scope>NUCLEOTIDE SEQUENCE [MRNA]</scope>
    <source>
        <tissue>Heart</tissue>
    </source>
</reference>
<reference key="2">
    <citation type="journal article" date="2007" name="Mol. Neurobiol.">
        <title>Ionic channel function in action potential generation: current perspective.</title>
        <authorList>
            <person name="Baranauskas G."/>
        </authorList>
    </citation>
    <scope>REVIEW</scope>
</reference>
<reference key="3">
    <citation type="journal article" date="2008" name="Neurochem. Res.">
        <title>The neuronal Kv4 channel complex.</title>
        <authorList>
            <person name="Covarrubias M."/>
            <person name="Bhattacharji A."/>
            <person name="De Santiago-Castillo J.A."/>
            <person name="Dougherty K."/>
            <person name="Kaulin Y.A."/>
            <person name="Na-Phuket T.R."/>
            <person name="Wang G."/>
        </authorList>
    </citation>
    <scope>REVIEW</scope>
</reference>
<keyword id="KW-0965">Cell junction</keyword>
<keyword id="KW-1003">Cell membrane</keyword>
<keyword id="KW-0966">Cell projection</keyword>
<keyword id="KW-0407">Ion channel</keyword>
<keyword id="KW-0406">Ion transport</keyword>
<keyword id="KW-0472">Membrane</keyword>
<keyword id="KW-0479">Metal-binding</keyword>
<keyword id="KW-0597">Phosphoprotein</keyword>
<keyword id="KW-0628">Postsynaptic cell membrane</keyword>
<keyword id="KW-0630">Potassium</keyword>
<keyword id="KW-0631">Potassium channel</keyword>
<keyword id="KW-0633">Potassium transport</keyword>
<keyword id="KW-1185">Reference proteome</keyword>
<keyword id="KW-0770">Synapse</keyword>
<keyword id="KW-0812">Transmembrane</keyword>
<keyword id="KW-1133">Transmembrane helix</keyword>
<keyword id="KW-0813">Transport</keyword>
<keyword id="KW-0851">Voltage-gated channel</keyword>
<keyword id="KW-0862">Zinc</keyword>
<evidence type="ECO:0000250" key="1">
    <source>
        <dbReference type="UniProtKB" id="P63142"/>
    </source>
</evidence>
<evidence type="ECO:0000250" key="2">
    <source>
        <dbReference type="UniProtKB" id="Q63881"/>
    </source>
</evidence>
<evidence type="ECO:0000250" key="3">
    <source>
        <dbReference type="UniProtKB" id="Q9NZV8"/>
    </source>
</evidence>
<evidence type="ECO:0000250" key="4">
    <source>
        <dbReference type="UniProtKB" id="Q9Z0V2"/>
    </source>
</evidence>
<evidence type="ECO:0000256" key="5">
    <source>
        <dbReference type="SAM" id="MobiDB-lite"/>
    </source>
</evidence>
<evidence type="ECO:0000305" key="6"/>
<evidence type="ECO:0000305" key="7">
    <source>
    </source>
</evidence>
<evidence type="ECO:0000305" key="8">
    <source>
    </source>
</evidence>
<accession>Q8HYZ1</accession>
<name>KCND2_MUSPF</name>
<sequence>MAAGVAAWLPFARAAAIGWMPVASGPMPAPPRQERKRTQDALIVLNVSGTRFQTWQDTLERYPDTLLGSSERDFFYHPETQQYFFDRDPDIFRHILNFYRTGKLHYPRHECISAYDEELAFFGLIPEIIGDCCYEEYKDRRRENAERLQDDADTDNTGESALPTMTARQRVWRAFENPHTSTMALVFYYVTGFFIAVSVIANVVETVPCGSSPGHIKELPCGERYAVAFFCLDTACVMIFTVEYLLRLAAAPSRYRFVRSVMSIIDVVAILPYYIGLVMTDNEDVSGAFVTLRVFRVFRIFKFSRHSQGLRILGYTLKSCASELGFLLFSLTMAIIIFATVMFYAEKGSSASKFTSIPAAFWYTIVTMTTLGYGDMVPKTIAGKIFGSICSLSGVLVIALPVPVIVSNFSRIYHQNQRADKRRAQKKARLARIRAAKTGSANAYMQSKRNGLLSNQLQSSEDEQAFVSKSGSSFETQHHHLLHCLEKTTNHEFVDEQVFEESCMEVATGNRPSSHSPSLSSQQGVTSTCCSRRHKKTFRIPNANVSGSHRGSVQELSTIQIRCVERTPLSNSRSSLNAKMEECVKLNCEQPYVTTAIISIPTPPVTTPEGDDRPESPEYSGGNIVRVSAL</sequence>
<gene>
    <name evidence="3" type="primary">KCND2</name>
</gene>
<protein>
    <recommendedName>
        <fullName evidence="3">A-type voltage-gated potassium channel KCND2</fullName>
    </recommendedName>
    <alternativeName>
        <fullName>Potassium voltage-gated channel subfamily D member 2</fullName>
    </alternativeName>
    <alternativeName>
        <fullName>Voltage-gated potassium channel subunit Kv4.2</fullName>
    </alternativeName>
</protein>